<comment type="function">
    <text evidence="1">Translocates 4-amino-4-deoxy-L-arabinose-phosphoundecaprenol (alpha-L-Ara4N-phosphoundecaprenol) from the cytoplasmic to the periplasmic side of the inner membrane.</text>
</comment>
<comment type="pathway">
    <text evidence="1">Bacterial outer membrane biogenesis; lipopolysaccharide biosynthesis.</text>
</comment>
<comment type="subunit">
    <text evidence="1">Heterodimer of ArnE and ArnF.</text>
</comment>
<comment type="subcellular location">
    <subcellularLocation>
        <location evidence="1">Cell inner membrane</location>
        <topology evidence="1">Multi-pass membrane protein</topology>
    </subcellularLocation>
</comment>
<comment type="similarity">
    <text evidence="1">Belongs to the ArnE family.</text>
</comment>
<accession>Q7N3R0</accession>
<evidence type="ECO:0000255" key="1">
    <source>
        <dbReference type="HAMAP-Rule" id="MF_01869"/>
    </source>
</evidence>
<dbReference type="EMBL" id="BX571867">
    <property type="protein sequence ID" value="CAE15029.1"/>
    <property type="molecule type" value="Genomic_DNA"/>
</dbReference>
<dbReference type="RefSeq" id="WP_011146877.1">
    <property type="nucleotide sequence ID" value="NC_005126.1"/>
</dbReference>
<dbReference type="SMR" id="Q7N3R0"/>
<dbReference type="STRING" id="243265.plu2655"/>
<dbReference type="GeneID" id="48848918"/>
<dbReference type="KEGG" id="plu:plu2655"/>
<dbReference type="eggNOG" id="COG2076">
    <property type="taxonomic scope" value="Bacteria"/>
</dbReference>
<dbReference type="HOGENOM" id="CLU_131462_5_1_6"/>
<dbReference type="OrthoDB" id="6058674at2"/>
<dbReference type="UniPathway" id="UPA00030"/>
<dbReference type="Proteomes" id="UP000002514">
    <property type="component" value="Chromosome"/>
</dbReference>
<dbReference type="GO" id="GO:0005886">
    <property type="term" value="C:plasma membrane"/>
    <property type="evidence" value="ECO:0007669"/>
    <property type="project" value="UniProtKB-SubCell"/>
</dbReference>
<dbReference type="GO" id="GO:1901505">
    <property type="term" value="F:carbohydrate derivative transmembrane transporter activity"/>
    <property type="evidence" value="ECO:0007669"/>
    <property type="project" value="InterPro"/>
</dbReference>
<dbReference type="GO" id="GO:0009245">
    <property type="term" value="P:lipid A biosynthetic process"/>
    <property type="evidence" value="ECO:0007669"/>
    <property type="project" value="UniProtKB-UniRule"/>
</dbReference>
<dbReference type="GO" id="GO:0009103">
    <property type="term" value="P:lipopolysaccharide biosynthetic process"/>
    <property type="evidence" value="ECO:0007669"/>
    <property type="project" value="UniProtKB-UniRule"/>
</dbReference>
<dbReference type="FunFam" id="1.10.3730.20:FF:000002">
    <property type="entry name" value="Probable 4-amino-4-deoxy-L-arabinose-phosphoundecaprenol flippase subunit ArnE"/>
    <property type="match status" value="1"/>
</dbReference>
<dbReference type="Gene3D" id="1.10.3730.20">
    <property type="match status" value="1"/>
</dbReference>
<dbReference type="HAMAP" id="MF_01869">
    <property type="entry name" value="Flippase_ArnE"/>
    <property type="match status" value="1"/>
</dbReference>
<dbReference type="InterPro" id="IPR000620">
    <property type="entry name" value="EamA_dom"/>
</dbReference>
<dbReference type="InterPro" id="IPR022883">
    <property type="entry name" value="Flippase_ArnE"/>
</dbReference>
<dbReference type="InterPro" id="IPR000390">
    <property type="entry name" value="Small_drug/metabolite_transptr"/>
</dbReference>
<dbReference type="NCBIfam" id="NF011625">
    <property type="entry name" value="PRK15051.1"/>
    <property type="match status" value="1"/>
</dbReference>
<dbReference type="PANTHER" id="PTHR30561:SF23">
    <property type="entry name" value="4-AMINO-4-DEOXY-L-ARABINOSE-PHOSPHOUNDECAPRENOL FLIPPASE SUBUNIT ARNE-RELATED"/>
    <property type="match status" value="1"/>
</dbReference>
<dbReference type="PANTHER" id="PTHR30561">
    <property type="entry name" value="SMR FAMILY PROTON-DEPENDENT DRUG EFFLUX TRANSPORTER SUGE"/>
    <property type="match status" value="1"/>
</dbReference>
<dbReference type="Pfam" id="PF00892">
    <property type="entry name" value="EamA"/>
    <property type="match status" value="1"/>
</dbReference>
<dbReference type="SUPFAM" id="SSF103481">
    <property type="entry name" value="Multidrug resistance efflux transporter EmrE"/>
    <property type="match status" value="1"/>
</dbReference>
<reference key="1">
    <citation type="journal article" date="2003" name="Nat. Biotechnol.">
        <title>The genome sequence of the entomopathogenic bacterium Photorhabdus luminescens.</title>
        <authorList>
            <person name="Duchaud E."/>
            <person name="Rusniok C."/>
            <person name="Frangeul L."/>
            <person name="Buchrieser C."/>
            <person name="Givaudan A."/>
            <person name="Taourit S."/>
            <person name="Bocs S."/>
            <person name="Boursaux-Eude C."/>
            <person name="Chandler M."/>
            <person name="Charles J.-F."/>
            <person name="Dassa E."/>
            <person name="Derose R."/>
            <person name="Derzelle S."/>
            <person name="Freyssinet G."/>
            <person name="Gaudriault S."/>
            <person name="Medigue C."/>
            <person name="Lanois A."/>
            <person name="Powell K."/>
            <person name="Siguier P."/>
            <person name="Vincent R."/>
            <person name="Wingate V."/>
            <person name="Zouine M."/>
            <person name="Glaser P."/>
            <person name="Boemare N."/>
            <person name="Danchin A."/>
            <person name="Kunst F."/>
        </authorList>
    </citation>
    <scope>NUCLEOTIDE SEQUENCE [LARGE SCALE GENOMIC DNA]</scope>
    <source>
        <strain>DSM 15139 / CIP 105565 / TT01</strain>
    </source>
</reference>
<feature type="chain" id="PRO_0000382979" description="Probable 4-amino-4-deoxy-L-arabinose-phosphoundecaprenol flippase subunit ArnE">
    <location>
        <begin position="1"/>
        <end position="113"/>
    </location>
</feature>
<feature type="transmembrane region" description="Helical" evidence="1">
    <location>
        <begin position="37"/>
        <end position="57"/>
    </location>
</feature>
<feature type="transmembrane region" description="Helical" evidence="1">
    <location>
        <begin position="62"/>
        <end position="82"/>
    </location>
</feature>
<feature type="transmembrane region" description="Helical" evidence="1">
    <location>
        <begin position="91"/>
        <end position="111"/>
    </location>
</feature>
<feature type="domain" description="EamA" evidence="1">
    <location>
        <begin position="45"/>
        <end position="111"/>
    </location>
</feature>
<proteinExistence type="inferred from homology"/>
<gene>
    <name evidence="1" type="primary">arnE</name>
    <name type="ordered locus">plu2655</name>
</gene>
<sequence>MISFSLLLLISLLTCAGQLCQKQAVMCWRSDVYQRASALKWLIGAVILLAVGMLFWLRLLQILPLGIAYPMLSINFIMVTLAGKFFYQEKAGIKHWSGVVFIMLGILLMSLNE</sequence>
<keyword id="KW-0997">Cell inner membrane</keyword>
<keyword id="KW-1003">Cell membrane</keyword>
<keyword id="KW-0441">Lipid A biosynthesis</keyword>
<keyword id="KW-0444">Lipid biosynthesis</keyword>
<keyword id="KW-0443">Lipid metabolism</keyword>
<keyword id="KW-0448">Lipopolysaccharide biosynthesis</keyword>
<keyword id="KW-0472">Membrane</keyword>
<keyword id="KW-1185">Reference proteome</keyword>
<keyword id="KW-0812">Transmembrane</keyword>
<keyword id="KW-1133">Transmembrane helix</keyword>
<keyword id="KW-0813">Transport</keyword>
<name>ARNE_PHOLL</name>
<protein>
    <recommendedName>
        <fullName evidence="1">Probable 4-amino-4-deoxy-L-arabinose-phosphoundecaprenol flippase subunit ArnE</fullName>
        <shortName evidence="1">L-Ara4N-phosphoundecaprenol flippase subunit ArnE</shortName>
    </recommendedName>
    <alternativeName>
        <fullName evidence="1">Undecaprenyl phosphate-aminoarabinose flippase subunit ArnE</fullName>
    </alternativeName>
</protein>
<organism>
    <name type="scientific">Photorhabdus laumondii subsp. laumondii (strain DSM 15139 / CIP 105565 / TT01)</name>
    <name type="common">Photorhabdus luminescens subsp. laumondii</name>
    <dbReference type="NCBI Taxonomy" id="243265"/>
    <lineage>
        <taxon>Bacteria</taxon>
        <taxon>Pseudomonadati</taxon>
        <taxon>Pseudomonadota</taxon>
        <taxon>Gammaproteobacteria</taxon>
        <taxon>Enterobacterales</taxon>
        <taxon>Morganellaceae</taxon>
        <taxon>Photorhabdus</taxon>
    </lineage>
</organism>